<proteinExistence type="evidence at transcript level"/>
<evidence type="ECO:0000250" key="1">
    <source>
        <dbReference type="UniProtKB" id="P14148"/>
    </source>
</evidence>
<evidence type="ECO:0000250" key="2">
    <source>
        <dbReference type="UniProtKB" id="P18124"/>
    </source>
</evidence>
<evidence type="ECO:0000305" key="3"/>
<gene>
    <name type="primary">RPL7</name>
</gene>
<name>RL7_BOVIN</name>
<accession>Q58DT1</accession>
<feature type="chain" id="PRO_0000104632" description="Large ribosomal subunit protein uL30">
    <location>
        <begin position="1"/>
        <end position="248"/>
    </location>
</feature>
<feature type="repeat" description="1">
    <location>
        <begin position="7"/>
        <end position="18"/>
    </location>
</feature>
<feature type="repeat" description="2">
    <location>
        <begin position="19"/>
        <end position="30"/>
    </location>
</feature>
<feature type="repeat" description="3">
    <location>
        <begin position="31"/>
        <end position="42"/>
    </location>
</feature>
<feature type="repeat" description="4">
    <location>
        <begin position="43"/>
        <end position="54"/>
    </location>
</feature>
<feature type="region of interest" description="4 X 12 AA tandem repeats">
    <location>
        <begin position="7"/>
        <end position="54"/>
    </location>
</feature>
<feature type="modified residue" description="N-acetylmethionine" evidence="2">
    <location>
        <position position="1"/>
    </location>
</feature>
<feature type="modified residue" description="Phosphothreonine" evidence="2">
    <location>
        <position position="17"/>
    </location>
</feature>
<feature type="modified residue" description="N6-acetyllysine" evidence="2">
    <location>
        <position position="124"/>
    </location>
</feature>
<feature type="modified residue" description="N6-succinyllysine" evidence="1">
    <location>
        <position position="127"/>
    </location>
</feature>
<feature type="modified residue" description="Phosphotyrosine" evidence="2">
    <location>
        <position position="139"/>
    </location>
</feature>
<keyword id="KW-0007">Acetylation</keyword>
<keyword id="KW-0963">Cytoplasm</keyword>
<keyword id="KW-0597">Phosphoprotein</keyword>
<keyword id="KW-1185">Reference proteome</keyword>
<keyword id="KW-0677">Repeat</keyword>
<keyword id="KW-0687">Ribonucleoprotein</keyword>
<keyword id="KW-0689">Ribosomal protein</keyword>
<keyword id="KW-0694">RNA-binding</keyword>
<comment type="function">
    <text evidence="2">Component of the large ribosomal subunit. The ribosome is a large ribonucleoprotein complex responsible for the synthesis of proteins in the cell. Binds to G-rich structures in 28S rRNA and in mRNAs. Plays a regulatory role in the translation apparatus; inhibits cell-free translation of mRNAs.</text>
</comment>
<comment type="subunit">
    <text evidence="2">Component of the large ribosomal subunit. Homodimer. Interacts with DHX33.</text>
</comment>
<comment type="subcellular location">
    <subcellularLocation>
        <location evidence="2">Cytoplasm</location>
    </subcellularLocation>
</comment>
<comment type="similarity">
    <text evidence="3">Belongs to the universal ribosomal protein uL30 family.</text>
</comment>
<sequence>MEGAEEKKKKVPAVPETLKKKRKNFAELKIKRLRKKFAQKMLRKARRKLIYEKAKHYHKEYRQMYRTEIRMARMARKAGNFYVPAEPKLAFVIRIRGINGVSPKVRKVLQLLRLRQIFNGTFVKLNKASINMLRIVEPYIAWGYPNLKSVNELIYKRGYGKINKKRIALTDNALIARSLGKYGIICMEDLIHEIYTVGKRFKEANNFLWPFKLSSPRGGMKKKTTHFVEGGDAGNREDQINRLIRRMN</sequence>
<protein>
    <recommendedName>
        <fullName evidence="3">Large ribosomal subunit protein uL30</fullName>
    </recommendedName>
    <alternativeName>
        <fullName>60S ribosomal protein L7</fullName>
    </alternativeName>
</protein>
<dbReference type="EMBL" id="BT021516">
    <property type="protein sequence ID" value="AAX46363.1"/>
    <property type="molecule type" value="mRNA"/>
</dbReference>
<dbReference type="RefSeq" id="NP_001014928.1">
    <property type="nucleotide sequence ID" value="NM_001014928.1"/>
</dbReference>
<dbReference type="SMR" id="Q58DT1"/>
<dbReference type="FunCoup" id="Q58DT1">
    <property type="interactions" value="2668"/>
</dbReference>
<dbReference type="STRING" id="9913.ENSBTAP00000026826"/>
<dbReference type="PaxDb" id="9913-ENSBTAP00000026826"/>
<dbReference type="PeptideAtlas" id="Q58DT1"/>
<dbReference type="GeneID" id="514966"/>
<dbReference type="KEGG" id="bta:514966"/>
<dbReference type="CTD" id="6129"/>
<dbReference type="VEuPathDB" id="HostDB:ENSBTAG00000020139"/>
<dbReference type="eggNOG" id="KOG3184">
    <property type="taxonomic scope" value="Eukaryota"/>
</dbReference>
<dbReference type="HOGENOM" id="CLU_055156_0_2_1"/>
<dbReference type="InParanoid" id="Q58DT1"/>
<dbReference type="OMA" id="IVEPWIA"/>
<dbReference type="OrthoDB" id="28644at2759"/>
<dbReference type="TreeFam" id="TF300740"/>
<dbReference type="Reactome" id="R-BTA-156827">
    <property type="pathway name" value="L13a-mediated translational silencing of Ceruloplasmin expression"/>
</dbReference>
<dbReference type="Reactome" id="R-BTA-1799339">
    <property type="pathway name" value="SRP-dependent cotranslational protein targeting to membrane"/>
</dbReference>
<dbReference type="Reactome" id="R-BTA-6791226">
    <property type="pathway name" value="Major pathway of rRNA processing in the nucleolus and cytosol"/>
</dbReference>
<dbReference type="Reactome" id="R-BTA-72689">
    <property type="pathway name" value="Formation of a pool of free 40S subunits"/>
</dbReference>
<dbReference type="Reactome" id="R-BTA-72706">
    <property type="pathway name" value="GTP hydrolysis and joining of the 60S ribosomal subunit"/>
</dbReference>
<dbReference type="Reactome" id="R-BTA-975956">
    <property type="pathway name" value="Nonsense Mediated Decay (NMD) independent of the Exon Junction Complex (EJC)"/>
</dbReference>
<dbReference type="Reactome" id="R-BTA-975957">
    <property type="pathway name" value="Nonsense Mediated Decay (NMD) enhanced by the Exon Junction Complex (EJC)"/>
</dbReference>
<dbReference type="CD-CODE" id="D7FE2080">
    <property type="entry name" value="Nucleolus"/>
</dbReference>
<dbReference type="Proteomes" id="UP000009136">
    <property type="component" value="Chromosome 14"/>
</dbReference>
<dbReference type="Bgee" id="ENSBTAG00000020139">
    <property type="expression patterns" value="Expressed in adenohypophysis and 104 other cell types or tissues"/>
</dbReference>
<dbReference type="GO" id="GO:0022625">
    <property type="term" value="C:cytosolic large ribosomal subunit"/>
    <property type="evidence" value="ECO:0000318"/>
    <property type="project" value="GO_Central"/>
</dbReference>
<dbReference type="GO" id="GO:0003723">
    <property type="term" value="F:RNA binding"/>
    <property type="evidence" value="ECO:0000318"/>
    <property type="project" value="GO_Central"/>
</dbReference>
<dbReference type="GO" id="GO:0003735">
    <property type="term" value="F:structural constituent of ribosome"/>
    <property type="evidence" value="ECO:0000318"/>
    <property type="project" value="GO_Central"/>
</dbReference>
<dbReference type="GO" id="GO:0000463">
    <property type="term" value="P:maturation of LSU-rRNA from tricistronic rRNA transcript (SSU-rRNA, 5.8S rRNA, LSU-rRNA)"/>
    <property type="evidence" value="ECO:0000318"/>
    <property type="project" value="GO_Central"/>
</dbReference>
<dbReference type="CDD" id="cd01657">
    <property type="entry name" value="Ribosomal_L7_archeal_euk"/>
    <property type="match status" value="1"/>
</dbReference>
<dbReference type="FunFam" id="3.30.1390.20:FF:000002">
    <property type="entry name" value="60S ribosomal protein L7"/>
    <property type="match status" value="1"/>
</dbReference>
<dbReference type="FunFam" id="3.30.1390.20:FF:000003">
    <property type="entry name" value="60S ribosomal protein L7"/>
    <property type="match status" value="1"/>
</dbReference>
<dbReference type="Gene3D" id="3.30.1390.20">
    <property type="entry name" value="Ribosomal protein L30, ferredoxin-like fold domain"/>
    <property type="match status" value="2"/>
</dbReference>
<dbReference type="InterPro" id="IPR036919">
    <property type="entry name" value="Ribo_uL30_ferredoxin-like_sf"/>
</dbReference>
<dbReference type="InterPro" id="IPR039699">
    <property type="entry name" value="Ribosomal_uL30"/>
</dbReference>
<dbReference type="InterPro" id="IPR018038">
    <property type="entry name" value="Ribosomal_uL30_CS"/>
</dbReference>
<dbReference type="InterPro" id="IPR005998">
    <property type="entry name" value="Ribosomal_uL30_euk"/>
</dbReference>
<dbReference type="InterPro" id="IPR035808">
    <property type="entry name" value="Ribosomal_uL30_euk_arc"/>
</dbReference>
<dbReference type="InterPro" id="IPR016082">
    <property type="entry name" value="Ribosomal_uL30_ferredoxin-like"/>
</dbReference>
<dbReference type="InterPro" id="IPR012988">
    <property type="entry name" value="Ribosomal_uL30_N_euk"/>
</dbReference>
<dbReference type="NCBIfam" id="TIGR01310">
    <property type="entry name" value="uL30_euk"/>
    <property type="match status" value="1"/>
</dbReference>
<dbReference type="PANTHER" id="PTHR11524">
    <property type="entry name" value="60S RIBOSOMAL PROTEIN L7"/>
    <property type="match status" value="1"/>
</dbReference>
<dbReference type="PANTHER" id="PTHR11524:SF12">
    <property type="entry name" value="LARGE RIBOSOMAL SUBUNIT PROTEIN UL30"/>
    <property type="match status" value="1"/>
</dbReference>
<dbReference type="Pfam" id="PF00327">
    <property type="entry name" value="Ribosomal_L30"/>
    <property type="match status" value="1"/>
</dbReference>
<dbReference type="Pfam" id="PF08079">
    <property type="entry name" value="Ribosomal_L30_N"/>
    <property type="match status" value="1"/>
</dbReference>
<dbReference type="SUPFAM" id="SSF55129">
    <property type="entry name" value="Ribosomal protein L30p/L7e"/>
    <property type="match status" value="1"/>
</dbReference>
<dbReference type="PROSITE" id="PS00634">
    <property type="entry name" value="RIBOSOMAL_L30"/>
    <property type="match status" value="1"/>
</dbReference>
<reference key="1">
    <citation type="journal article" date="2005" name="BMC Genomics">
        <title>Characterization of 954 bovine full-CDS cDNA sequences.</title>
        <authorList>
            <person name="Harhay G.P."/>
            <person name="Sonstegard T.S."/>
            <person name="Keele J.W."/>
            <person name="Heaton M.P."/>
            <person name="Clawson M.L."/>
            <person name="Snelling W.M."/>
            <person name="Wiedmann R.T."/>
            <person name="Van Tassell C.P."/>
            <person name="Smith T.P.L."/>
        </authorList>
    </citation>
    <scope>NUCLEOTIDE SEQUENCE [LARGE SCALE MRNA]</scope>
</reference>
<organism>
    <name type="scientific">Bos taurus</name>
    <name type="common">Bovine</name>
    <dbReference type="NCBI Taxonomy" id="9913"/>
    <lineage>
        <taxon>Eukaryota</taxon>
        <taxon>Metazoa</taxon>
        <taxon>Chordata</taxon>
        <taxon>Craniata</taxon>
        <taxon>Vertebrata</taxon>
        <taxon>Euteleostomi</taxon>
        <taxon>Mammalia</taxon>
        <taxon>Eutheria</taxon>
        <taxon>Laurasiatheria</taxon>
        <taxon>Artiodactyla</taxon>
        <taxon>Ruminantia</taxon>
        <taxon>Pecora</taxon>
        <taxon>Bovidae</taxon>
        <taxon>Bovinae</taxon>
        <taxon>Bos</taxon>
    </lineage>
</organism>